<dbReference type="EC" id="3.1.3.89" evidence="1"/>
<dbReference type="EMBL" id="AM933172">
    <property type="protein sequence ID" value="CAR33898.1"/>
    <property type="molecule type" value="Genomic_DNA"/>
</dbReference>
<dbReference type="RefSeq" id="WP_000813882.1">
    <property type="nucleotide sequence ID" value="NC_011294.1"/>
</dbReference>
<dbReference type="SMR" id="B5R313"/>
<dbReference type="KEGG" id="set:SEN2314"/>
<dbReference type="HOGENOM" id="CLU_084784_0_0_6"/>
<dbReference type="Proteomes" id="UP000000613">
    <property type="component" value="Chromosome"/>
</dbReference>
<dbReference type="GO" id="GO:0005737">
    <property type="term" value="C:cytoplasm"/>
    <property type="evidence" value="ECO:0007669"/>
    <property type="project" value="UniProtKB-SubCell"/>
</dbReference>
<dbReference type="GO" id="GO:0002953">
    <property type="term" value="F:5'-deoxynucleotidase activity"/>
    <property type="evidence" value="ECO:0007669"/>
    <property type="project" value="UniProtKB-EC"/>
</dbReference>
<dbReference type="GO" id="GO:0046872">
    <property type="term" value="F:metal ion binding"/>
    <property type="evidence" value="ECO:0007669"/>
    <property type="project" value="UniProtKB-KW"/>
</dbReference>
<dbReference type="GO" id="GO:0000166">
    <property type="term" value="F:nucleotide binding"/>
    <property type="evidence" value="ECO:0007669"/>
    <property type="project" value="UniProtKB-KW"/>
</dbReference>
<dbReference type="FunFam" id="1.10.3210.10:FF:000002">
    <property type="entry name" value="Nucleotidase YfbR"/>
    <property type="match status" value="1"/>
</dbReference>
<dbReference type="Gene3D" id="1.10.3210.10">
    <property type="entry name" value="Hypothetical protein af1432"/>
    <property type="match status" value="1"/>
</dbReference>
<dbReference type="HAMAP" id="MF_01100">
    <property type="entry name" value="5DNU"/>
    <property type="match status" value="1"/>
</dbReference>
<dbReference type="InterPro" id="IPR003607">
    <property type="entry name" value="HD/PDEase_dom"/>
</dbReference>
<dbReference type="InterPro" id="IPR006674">
    <property type="entry name" value="HD_domain"/>
</dbReference>
<dbReference type="InterPro" id="IPR022971">
    <property type="entry name" value="YfbR"/>
</dbReference>
<dbReference type="InterPro" id="IPR039356">
    <property type="entry name" value="YfbR/HDDC2"/>
</dbReference>
<dbReference type="NCBIfam" id="NF003009">
    <property type="entry name" value="PRK03826.1"/>
    <property type="match status" value="1"/>
</dbReference>
<dbReference type="PANTHER" id="PTHR11845">
    <property type="entry name" value="5'-DEOXYNUCLEOTIDASE HDDC2"/>
    <property type="match status" value="1"/>
</dbReference>
<dbReference type="PANTHER" id="PTHR11845:SF13">
    <property type="entry name" value="5'-DEOXYNUCLEOTIDASE HDDC2"/>
    <property type="match status" value="1"/>
</dbReference>
<dbReference type="Pfam" id="PF12917">
    <property type="entry name" value="YfbR-like"/>
    <property type="match status" value="1"/>
</dbReference>
<dbReference type="SMART" id="SM00471">
    <property type="entry name" value="HDc"/>
    <property type="match status" value="1"/>
</dbReference>
<dbReference type="SUPFAM" id="SSF109604">
    <property type="entry name" value="HD-domain/PDEase-like"/>
    <property type="match status" value="1"/>
</dbReference>
<dbReference type="PROSITE" id="PS51831">
    <property type="entry name" value="HD"/>
    <property type="match status" value="1"/>
</dbReference>
<protein>
    <recommendedName>
        <fullName evidence="1">5'-deoxynucleotidase YfbR</fullName>
        <ecNumber evidence="1">3.1.3.89</ecNumber>
    </recommendedName>
    <alternativeName>
        <fullName evidence="1">5'-deoxyribonucleotidase</fullName>
    </alternativeName>
    <alternativeName>
        <fullName evidence="1">Nucleoside 5'-monophosphate phosphohydrolase</fullName>
    </alternativeName>
</protein>
<feature type="chain" id="PRO_1000136973" description="5'-deoxynucleotidase YfbR">
    <location>
        <begin position="1"/>
        <end position="199"/>
    </location>
</feature>
<feature type="domain" description="HD" evidence="2">
    <location>
        <begin position="30"/>
        <end position="142"/>
    </location>
</feature>
<feature type="binding site" evidence="1">
    <location>
        <begin position="18"/>
        <end position="19"/>
    </location>
    <ligand>
        <name>substrate</name>
    </ligand>
</feature>
<feature type="binding site" evidence="1">
    <location>
        <position position="33"/>
    </location>
    <ligand>
        <name>a divalent metal cation</name>
        <dbReference type="ChEBI" id="CHEBI:60240"/>
    </ligand>
</feature>
<feature type="binding site" evidence="1">
    <location>
        <position position="33"/>
    </location>
    <ligand>
        <name>substrate</name>
    </ligand>
</feature>
<feature type="binding site" evidence="1">
    <location>
        <position position="68"/>
    </location>
    <ligand>
        <name>a divalent metal cation</name>
        <dbReference type="ChEBI" id="CHEBI:60240"/>
    </ligand>
</feature>
<feature type="binding site" evidence="1">
    <location>
        <position position="69"/>
    </location>
    <ligand>
        <name>a divalent metal cation</name>
        <dbReference type="ChEBI" id="CHEBI:60240"/>
    </ligand>
</feature>
<feature type="binding site" evidence="1">
    <location>
        <position position="69"/>
    </location>
    <ligand>
        <name>substrate</name>
    </ligand>
</feature>
<feature type="binding site" evidence="1">
    <location>
        <begin position="77"/>
        <end position="80"/>
    </location>
    <ligand>
        <name>substrate</name>
    </ligand>
</feature>
<feature type="binding site" evidence="1">
    <location>
        <position position="137"/>
    </location>
    <ligand>
        <name>a divalent metal cation</name>
        <dbReference type="ChEBI" id="CHEBI:60240"/>
    </ligand>
</feature>
<feature type="binding site" evidence="1">
    <location>
        <position position="137"/>
    </location>
    <ligand>
        <name>substrate</name>
    </ligand>
</feature>
<feature type="site" description="Appears to be important in orienting the phosphate for catalysis" evidence="1">
    <location>
        <position position="18"/>
    </location>
</feature>
<proteinExistence type="inferred from homology"/>
<reference key="1">
    <citation type="journal article" date="2008" name="Genome Res.">
        <title>Comparative genome analysis of Salmonella enteritidis PT4 and Salmonella gallinarum 287/91 provides insights into evolutionary and host adaptation pathways.</title>
        <authorList>
            <person name="Thomson N.R."/>
            <person name="Clayton D.J."/>
            <person name="Windhorst D."/>
            <person name="Vernikos G."/>
            <person name="Davidson S."/>
            <person name="Churcher C."/>
            <person name="Quail M.A."/>
            <person name="Stevens M."/>
            <person name="Jones M.A."/>
            <person name="Watson M."/>
            <person name="Barron A."/>
            <person name="Layton A."/>
            <person name="Pickard D."/>
            <person name="Kingsley R.A."/>
            <person name="Bignell A."/>
            <person name="Clark L."/>
            <person name="Harris B."/>
            <person name="Ormond D."/>
            <person name="Abdellah Z."/>
            <person name="Brooks K."/>
            <person name="Cherevach I."/>
            <person name="Chillingworth T."/>
            <person name="Woodward J."/>
            <person name="Norberczak H."/>
            <person name="Lord A."/>
            <person name="Arrowsmith C."/>
            <person name="Jagels K."/>
            <person name="Moule S."/>
            <person name="Mungall K."/>
            <person name="Saunders M."/>
            <person name="Whitehead S."/>
            <person name="Chabalgoity J.A."/>
            <person name="Maskell D."/>
            <person name="Humphreys T."/>
            <person name="Roberts M."/>
            <person name="Barrow P.A."/>
            <person name="Dougan G."/>
            <person name="Parkhill J."/>
        </authorList>
    </citation>
    <scope>NUCLEOTIDE SEQUENCE [LARGE SCALE GENOMIC DNA]</scope>
    <source>
        <strain>P125109</strain>
    </source>
</reference>
<sequence length="199" mass="22697">MKQSHFFAHLSRMKLINRWPLMRNVRTENVSEHSLQVAMVAHALAAIKNRKFGGQLNAERIALLAMYHDASEVLTGDLPTPVKYFNSQIAQEYKAIEKIAQQKLVDMAPDELRDIFAPLIDENAWSEEEQAIVKQADALCAYLKCLEELSAGNNEFGLAKTRLEKTLELRRSQEMDYFMAVFVPSFHLSLDEISQDSPL</sequence>
<gene>
    <name evidence="1" type="primary">yfbR</name>
    <name type="ordered locus">SEN2314</name>
</gene>
<name>5DNU_SALEP</name>
<keyword id="KW-0963">Cytoplasm</keyword>
<keyword id="KW-0378">Hydrolase</keyword>
<keyword id="KW-0479">Metal-binding</keyword>
<keyword id="KW-0547">Nucleotide-binding</keyword>
<accession>B5R313</accession>
<comment type="function">
    <text evidence="1">Catalyzes the strictly specific dephosphorylation of 2'-deoxyribonucleoside 5'-monophosphates.</text>
</comment>
<comment type="catalytic activity">
    <reaction evidence="1">
        <text>a 2'-deoxyribonucleoside 5'-phosphate + H2O = a 2'-deoxyribonucleoside + phosphate</text>
        <dbReference type="Rhea" id="RHEA:36167"/>
        <dbReference type="ChEBI" id="CHEBI:15377"/>
        <dbReference type="ChEBI" id="CHEBI:18274"/>
        <dbReference type="ChEBI" id="CHEBI:43474"/>
        <dbReference type="ChEBI" id="CHEBI:65317"/>
        <dbReference type="EC" id="3.1.3.89"/>
    </reaction>
</comment>
<comment type="cofactor">
    <cofactor evidence="1">
        <name>a divalent metal cation</name>
        <dbReference type="ChEBI" id="CHEBI:60240"/>
    </cofactor>
</comment>
<comment type="subunit">
    <text evidence="1">Homodimer.</text>
</comment>
<comment type="subcellular location">
    <subcellularLocation>
        <location evidence="1">Cytoplasm</location>
    </subcellularLocation>
</comment>
<comment type="similarity">
    <text evidence="1">Belongs to the 5DNU family.</text>
</comment>
<evidence type="ECO:0000255" key="1">
    <source>
        <dbReference type="HAMAP-Rule" id="MF_01100"/>
    </source>
</evidence>
<evidence type="ECO:0000255" key="2">
    <source>
        <dbReference type="PROSITE-ProRule" id="PRU01175"/>
    </source>
</evidence>
<organism>
    <name type="scientific">Salmonella enteritidis PT4 (strain P125109)</name>
    <dbReference type="NCBI Taxonomy" id="550537"/>
    <lineage>
        <taxon>Bacteria</taxon>
        <taxon>Pseudomonadati</taxon>
        <taxon>Pseudomonadota</taxon>
        <taxon>Gammaproteobacteria</taxon>
        <taxon>Enterobacterales</taxon>
        <taxon>Enterobacteriaceae</taxon>
        <taxon>Salmonella</taxon>
    </lineage>
</organism>